<proteinExistence type="evidence at transcript level"/>
<comment type="function">
    <text>Through the carboxylation of phosphoenolpyruvate (PEP) it forms oxaloacetate, a four-carbon dicarboxylic acid source for the tricarboxylic acid cycle.</text>
</comment>
<comment type="catalytic activity">
    <reaction>
        <text>oxaloacetate + phosphate = phosphoenolpyruvate + hydrogencarbonate</text>
        <dbReference type="Rhea" id="RHEA:28370"/>
        <dbReference type="ChEBI" id="CHEBI:16452"/>
        <dbReference type="ChEBI" id="CHEBI:17544"/>
        <dbReference type="ChEBI" id="CHEBI:43474"/>
        <dbReference type="ChEBI" id="CHEBI:58702"/>
        <dbReference type="EC" id="4.1.1.31"/>
    </reaction>
</comment>
<comment type="cofactor">
    <cofactor evidence="1">
        <name>Mg(2+)</name>
        <dbReference type="ChEBI" id="CHEBI:18420"/>
    </cofactor>
</comment>
<comment type="activity regulation">
    <text>By light-reversible phosphorylation.</text>
</comment>
<comment type="subunit">
    <text evidence="1">Homotetramer.</text>
</comment>
<comment type="subcellular location">
    <subcellularLocation>
        <location>Cytoplasm</location>
    </subcellularLocation>
</comment>
<comment type="similarity">
    <text evidence="2">Belongs to the PEPCase type 1 family.</text>
</comment>
<protein>
    <recommendedName>
        <fullName>Phosphoenolpyruvate carboxylase, housekeeping isozyme</fullName>
        <shortName>PEPCase</shortName>
        <ecNumber>4.1.1.31</ecNumber>
    </recommendedName>
    <alternativeName>
        <fullName>PEPC 1</fullName>
    </alternativeName>
</protein>
<dbReference type="EC" id="4.1.1.31"/>
<dbReference type="EMBL" id="D10717">
    <property type="protein sequence ID" value="BAA01560.1"/>
    <property type="molecule type" value="mRNA"/>
</dbReference>
<dbReference type="PIR" id="JW0072">
    <property type="entry name" value="JW0072"/>
</dbReference>
<dbReference type="PIR" id="S28428">
    <property type="entry name" value="S28428"/>
</dbReference>
<dbReference type="RefSeq" id="NP_001237602.1">
    <property type="nucleotide sequence ID" value="NM_001250673.1"/>
</dbReference>
<dbReference type="SMR" id="Q02909"/>
<dbReference type="FunCoup" id="Q02909">
    <property type="interactions" value="447"/>
</dbReference>
<dbReference type="STRING" id="3847.Q02909"/>
<dbReference type="PaxDb" id="3847-GLYMA20G09810.1"/>
<dbReference type="ProMEX" id="Q02909"/>
<dbReference type="EnsemblPlants" id="KRH26228">
    <property type="protein sequence ID" value="KRH26228"/>
    <property type="gene ID" value="GLYMA_12G161300"/>
</dbReference>
<dbReference type="GeneID" id="547769"/>
<dbReference type="Gramene" id="KRH26228">
    <property type="protein sequence ID" value="KRH26228"/>
    <property type="gene ID" value="GLYMA_12G161300"/>
</dbReference>
<dbReference type="KEGG" id="gmx:547769"/>
<dbReference type="eggNOG" id="ENOG502QPVS">
    <property type="taxonomic scope" value="Eukaryota"/>
</dbReference>
<dbReference type="HOGENOM" id="CLU_006557_2_0_1"/>
<dbReference type="InParanoid" id="Q02909"/>
<dbReference type="OMA" id="GPTHRFI"/>
<dbReference type="OrthoDB" id="1365747at2759"/>
<dbReference type="Proteomes" id="UP000008827">
    <property type="component" value="Chromosome 12"/>
</dbReference>
<dbReference type="GO" id="GO:0005829">
    <property type="term" value="C:cytosol"/>
    <property type="evidence" value="ECO:0000318"/>
    <property type="project" value="GO_Central"/>
</dbReference>
<dbReference type="GO" id="GO:0008964">
    <property type="term" value="F:phosphoenolpyruvate carboxylase activity"/>
    <property type="evidence" value="ECO:0000318"/>
    <property type="project" value="GO_Central"/>
</dbReference>
<dbReference type="GO" id="GO:0015977">
    <property type="term" value="P:carbon fixation"/>
    <property type="evidence" value="ECO:0007669"/>
    <property type="project" value="UniProtKB-KW"/>
</dbReference>
<dbReference type="GO" id="GO:0048366">
    <property type="term" value="P:leaf development"/>
    <property type="evidence" value="ECO:0000318"/>
    <property type="project" value="GO_Central"/>
</dbReference>
<dbReference type="GO" id="GO:0015979">
    <property type="term" value="P:photosynthesis"/>
    <property type="evidence" value="ECO:0007669"/>
    <property type="project" value="UniProtKB-KW"/>
</dbReference>
<dbReference type="GO" id="GO:0006099">
    <property type="term" value="P:tricarboxylic acid cycle"/>
    <property type="evidence" value="ECO:0007669"/>
    <property type="project" value="InterPro"/>
</dbReference>
<dbReference type="FunFam" id="1.20.1440.90:FF:000001">
    <property type="entry name" value="Phosphoenolpyruvate carboxylase 1"/>
    <property type="match status" value="1"/>
</dbReference>
<dbReference type="Gene3D" id="1.20.1440.90">
    <property type="entry name" value="Phosphoenolpyruvate/pyruvate domain"/>
    <property type="match status" value="1"/>
</dbReference>
<dbReference type="HAMAP" id="MF_00595">
    <property type="entry name" value="PEPcase_type1"/>
    <property type="match status" value="1"/>
</dbReference>
<dbReference type="InterPro" id="IPR021135">
    <property type="entry name" value="PEP_COase"/>
</dbReference>
<dbReference type="InterPro" id="IPR022805">
    <property type="entry name" value="PEP_COase_bac/pln-type"/>
</dbReference>
<dbReference type="InterPro" id="IPR018129">
    <property type="entry name" value="PEP_COase_Lys_AS"/>
</dbReference>
<dbReference type="InterPro" id="IPR033129">
    <property type="entry name" value="PEPCASE_His_AS"/>
</dbReference>
<dbReference type="InterPro" id="IPR015813">
    <property type="entry name" value="Pyrv/PenolPyrv_kinase-like_dom"/>
</dbReference>
<dbReference type="NCBIfam" id="NF000584">
    <property type="entry name" value="PRK00009.1"/>
    <property type="match status" value="1"/>
</dbReference>
<dbReference type="PANTHER" id="PTHR30523">
    <property type="entry name" value="PHOSPHOENOLPYRUVATE CARBOXYLASE"/>
    <property type="match status" value="1"/>
</dbReference>
<dbReference type="PANTHER" id="PTHR30523:SF33">
    <property type="entry name" value="PHOSPHOENOLPYRUVATE CARBOXYLASE 3"/>
    <property type="match status" value="1"/>
</dbReference>
<dbReference type="Pfam" id="PF00311">
    <property type="entry name" value="PEPcase"/>
    <property type="match status" value="1"/>
</dbReference>
<dbReference type="PRINTS" id="PR00150">
    <property type="entry name" value="PEPCARBXLASE"/>
</dbReference>
<dbReference type="SUPFAM" id="SSF51621">
    <property type="entry name" value="Phosphoenolpyruvate/pyruvate domain"/>
    <property type="match status" value="1"/>
</dbReference>
<dbReference type="PROSITE" id="PS00781">
    <property type="entry name" value="PEPCASE_1"/>
    <property type="match status" value="1"/>
</dbReference>
<dbReference type="PROSITE" id="PS00393">
    <property type="entry name" value="PEPCASE_2"/>
    <property type="match status" value="1"/>
</dbReference>
<organism>
    <name type="scientific">Glycine max</name>
    <name type="common">Soybean</name>
    <name type="synonym">Glycine hispida</name>
    <dbReference type="NCBI Taxonomy" id="3847"/>
    <lineage>
        <taxon>Eukaryota</taxon>
        <taxon>Viridiplantae</taxon>
        <taxon>Streptophyta</taxon>
        <taxon>Embryophyta</taxon>
        <taxon>Tracheophyta</taxon>
        <taxon>Spermatophyta</taxon>
        <taxon>Magnoliopsida</taxon>
        <taxon>eudicotyledons</taxon>
        <taxon>Gunneridae</taxon>
        <taxon>Pentapetalae</taxon>
        <taxon>rosids</taxon>
        <taxon>fabids</taxon>
        <taxon>Fabales</taxon>
        <taxon>Fabaceae</taxon>
        <taxon>Papilionoideae</taxon>
        <taxon>50 kb inversion clade</taxon>
        <taxon>NPAAA clade</taxon>
        <taxon>indigoferoid/millettioid clade</taxon>
        <taxon>Phaseoleae</taxon>
        <taxon>Glycine</taxon>
        <taxon>Glycine subgen. Soja</taxon>
    </lineage>
</organism>
<name>CAPP1_SOYBN</name>
<sequence>MANRNLEKMASIDAQLRLLVPAKVSEDDKLVEYDALLLDRFLDILQDLHGEDLKETVQEVYELSAEYEGKHDPKKLEELGNLITSLDAGDSIVVAKSFSHMLNLANLAEEVQIAHSRRNKLKKGDFADENNATTESDIEETLKKLVVDMKKSPQEVFDALKNQTVDLVLTAHPTQSVRRSLLQKHGRIRNNLTQLYAKDITPDDKQELDEALQREIQAAFRTDEIRRTPPTPQDEMRAGMSYFHETIWKGVPTFLRRVDTALKNIGINERVPYNAPLIQFSSWMGGDRDGNPRVTPEVTRDVCLLARMMAANLYYSQIEDLMFELSMWRCNDELRVRADELNRSSKKNSVAKHYIEFWKAIPPNEPYRVLLGEVRNRLYQTRERSRHLLAHGYSDIPEEETFTNVEEFLEPLELCYRSLCACGDRAIADGSLLDFLRQVSTFGLSLVRLDIRQESDRHTDVLDAITKHLEIGSYQEWSEEKRQQWLLSELSGKRPLFGPDLPQTEEIRDVLETFHVIAELPLDNFGAYIISMATAPSDVLAVELLQRECHVKHPLRVVPLFEKLADLEAAPAALARLFSVDWYRNRINGKQEVMIGYSDSGKDAGRFSAAWQLYKAQEELIMVAKQYGVKLTMFHGRGGTVGRGGGPTHLAILSQPPETIHGSLRVTVQGEVIEQSFGEQHLCFRTLQRFTAATLEHGMHPPISPKPEWRALMDEMAVIATEEYRSIVFKEPRFVEYFRLATPELEYGRMNIGSRPAKRRPSGGIETLRAIPWIFAWTQTRFHLPVWLGFGAAFKHVIEKDVRNIHVLQEMYNQWPFFRVTIDLVEMVFAKGDPGIAALYDRLLVSEDLWSFGEQLRTMYEETKELLLQVAGHRDLLEGDPYLKQRLRLRDSYITTLNVCQAYTLKRIRDPNYNVKLRPHISKESIEISKPADELITLNPTSEYAPGLEDTLILTMKGIAAGLQNTG</sequence>
<feature type="chain" id="PRO_0000166680" description="Phosphoenolpyruvate carboxylase, housekeeping isozyme">
    <location>
        <begin position="1"/>
        <end position="967"/>
    </location>
</feature>
<feature type="active site" evidence="1">
    <location>
        <position position="172"/>
    </location>
</feature>
<feature type="active site" evidence="1">
    <location>
        <position position="602"/>
    </location>
</feature>
<feature type="modified residue" description="Phosphoserine" evidence="1">
    <location>
        <position position="11"/>
    </location>
</feature>
<gene>
    <name type="primary">PPC16</name>
</gene>
<keyword id="KW-0021">Allosteric enzyme</keyword>
<keyword id="KW-0120">Carbon dioxide fixation</keyword>
<keyword id="KW-0963">Cytoplasm</keyword>
<keyword id="KW-0456">Lyase</keyword>
<keyword id="KW-0460">Magnesium</keyword>
<keyword id="KW-0597">Phosphoprotein</keyword>
<keyword id="KW-0602">Photosynthesis</keyword>
<keyword id="KW-1185">Reference proteome</keyword>
<reference key="1">
    <citation type="journal article" date="1992" name="Plant Mol. Biol.">
        <title>cDNA sequence and expression of a phosphoenolpyruvate carboxylase gene from soybean.</title>
        <authorList>
            <person name="Sugimoto T."/>
            <person name="Kawasaki T."/>
            <person name="Kato T."/>
            <person name="Whittier R.F."/>
            <person name="Shibata D."/>
            <person name="Kawamura Y."/>
        </authorList>
    </citation>
    <scope>NUCLEOTIDE SEQUENCE [MRNA]</scope>
</reference>
<evidence type="ECO:0000250" key="1"/>
<evidence type="ECO:0000305" key="2"/>
<accession>Q02909</accession>